<accession>P08611</accession>
<proteinExistence type="evidence at protein level"/>
<feature type="peptide" id="PRO_0000044397" description="Kassinin">
    <location>
        <begin position="1"/>
        <end position="12"/>
    </location>
</feature>
<feature type="modified residue" description="Methionine amide" evidence="1">
    <location>
        <position position="12"/>
    </location>
</feature>
<feature type="helix" evidence="3">
    <location>
        <begin position="4"/>
        <end position="11"/>
    </location>
</feature>
<reference key="1">
    <citation type="journal article" date="1977" name="Experientia">
        <title>Amino acid composition and sequence of kassinin, a tachykinin dodecapeptide from the skin of the African frog Kassina senegalensis.</title>
        <authorList>
            <person name="Anastasi A."/>
            <person name="Montecucchi P.C."/>
            <person name="Erspamer V."/>
            <person name="Visser J."/>
        </authorList>
    </citation>
    <scope>PROTEIN SEQUENCE</scope>
    <scope>AMIDATION AT MET-12</scope>
    <source>
        <tissue>Skin secretion</tissue>
    </source>
</reference>
<protein>
    <recommendedName>
        <fullName>Kassinin</fullName>
    </recommendedName>
</protein>
<name>TKN_KASSE</name>
<keyword id="KW-0002">3D-structure</keyword>
<keyword id="KW-0027">Amidation</keyword>
<keyword id="KW-0878">Amphibian defense peptide</keyword>
<keyword id="KW-0903">Direct protein sequencing</keyword>
<keyword id="KW-0527">Neuropeptide</keyword>
<keyword id="KW-0964">Secreted</keyword>
<evidence type="ECO:0000269" key="1">
    <source>
    </source>
</evidence>
<evidence type="ECO:0000305" key="2"/>
<evidence type="ECO:0007829" key="3">
    <source>
        <dbReference type="PDB" id="1MYU"/>
    </source>
</evidence>
<dbReference type="PIR" id="S07206">
    <property type="entry name" value="S07206"/>
</dbReference>
<dbReference type="PDB" id="1MYU">
    <property type="method" value="NMR"/>
    <property type="chains" value="A=1-12"/>
</dbReference>
<dbReference type="PDBsum" id="1MYU"/>
<dbReference type="BMRB" id="P08611"/>
<dbReference type="SMR" id="P08611"/>
<dbReference type="EvolutionaryTrace" id="P08611"/>
<dbReference type="GO" id="GO:0005576">
    <property type="term" value="C:extracellular region"/>
    <property type="evidence" value="ECO:0007669"/>
    <property type="project" value="UniProtKB-SubCell"/>
</dbReference>
<dbReference type="GO" id="GO:0006952">
    <property type="term" value="P:defense response"/>
    <property type="evidence" value="ECO:0007669"/>
    <property type="project" value="UniProtKB-KW"/>
</dbReference>
<dbReference type="GO" id="GO:0007218">
    <property type="term" value="P:neuropeptide signaling pathway"/>
    <property type="evidence" value="ECO:0007669"/>
    <property type="project" value="UniProtKB-KW"/>
</dbReference>
<dbReference type="InterPro" id="IPR013055">
    <property type="entry name" value="Tachy_Neuro_lke_CS"/>
</dbReference>
<dbReference type="PROSITE" id="PS00267">
    <property type="entry name" value="TACHYKININ"/>
    <property type="match status" value="1"/>
</dbReference>
<comment type="function">
    <text>Tachykinins are active peptides which excite neurons, evoke behavioral responses, are potent vasodilators and secretagogues, and contract (directly or indirectly) many smooth muscles.</text>
</comment>
<comment type="subcellular location">
    <subcellularLocation>
        <location>Secreted</location>
    </subcellularLocation>
</comment>
<comment type="tissue specificity">
    <text>Expressed by the skin glands.</text>
</comment>
<comment type="similarity">
    <text evidence="2">Belongs to the tachykinin family.</text>
</comment>
<sequence>DVPKSDQFVGLM</sequence>
<organism>
    <name type="scientific">Kassina senegalensis</name>
    <name type="common">Senegal running frog</name>
    <dbReference type="NCBI Taxonomy" id="8415"/>
    <lineage>
        <taxon>Eukaryota</taxon>
        <taxon>Metazoa</taxon>
        <taxon>Chordata</taxon>
        <taxon>Craniata</taxon>
        <taxon>Vertebrata</taxon>
        <taxon>Euteleostomi</taxon>
        <taxon>Amphibia</taxon>
        <taxon>Batrachia</taxon>
        <taxon>Anura</taxon>
        <taxon>Neobatrachia</taxon>
        <taxon>Microhyloidea</taxon>
        <taxon>Hyperoliidae</taxon>
        <taxon>Kassina</taxon>
    </lineage>
</organism>